<name>CSS4B_PROMP</name>
<sequence length="73" mass="7875">MVCTQRVAGLGHMNLRILENNKGKKVVAVDPVGAREGNWVFTASGSAARFACPNPEVQTDLTIGGIIDYWESN</sequence>
<gene>
    <name evidence="4" type="primary">csoS4B</name>
    <name type="ordered locus">PMM0555</name>
</gene>
<protein>
    <recommendedName>
        <fullName evidence="4">Carboxysome shell vertex protein CsoS4B</fullName>
    </recommendedName>
</protein>
<proteinExistence type="inferred from homology"/>
<evidence type="ECO:0000250" key="1">
    <source>
        <dbReference type="UniProtKB" id="O85043"/>
    </source>
</evidence>
<evidence type="ECO:0000255" key="2">
    <source>
        <dbReference type="PROSITE-ProRule" id="PRU01280"/>
    </source>
</evidence>
<evidence type="ECO:0000269" key="3">
    <source>
    </source>
</evidence>
<evidence type="ECO:0000303" key="4">
    <source>
    </source>
</evidence>
<evidence type="ECO:0000305" key="5"/>
<evidence type="ECO:0000305" key="6">
    <source>
    </source>
</evidence>
<keyword id="KW-1283">Bacterial microcompartment</keyword>
<keyword id="KW-0120">Carbon dioxide fixation</keyword>
<keyword id="KW-1282">Carboxysome</keyword>
<keyword id="KW-0602">Photosynthesis</keyword>
<accession>Q7V2C5</accession>
<dbReference type="EMBL" id="BX548174">
    <property type="protein sequence ID" value="CAE19014.1"/>
    <property type="molecule type" value="Genomic_DNA"/>
</dbReference>
<dbReference type="SMR" id="Q7V2C5"/>
<dbReference type="STRING" id="59919.PMM0555"/>
<dbReference type="KEGG" id="pmm:PMM0555"/>
<dbReference type="eggNOG" id="COG4576">
    <property type="taxonomic scope" value="Bacteria"/>
</dbReference>
<dbReference type="HOGENOM" id="CLU_148498_1_0_3"/>
<dbReference type="Proteomes" id="UP000001026">
    <property type="component" value="Chromosome"/>
</dbReference>
<dbReference type="GO" id="GO:0031470">
    <property type="term" value="C:carboxysome"/>
    <property type="evidence" value="ECO:0007669"/>
    <property type="project" value="UniProtKB-SubCell"/>
</dbReference>
<dbReference type="GO" id="GO:0015977">
    <property type="term" value="P:carbon fixation"/>
    <property type="evidence" value="ECO:0007669"/>
    <property type="project" value="UniProtKB-KW"/>
</dbReference>
<dbReference type="GO" id="GO:0015979">
    <property type="term" value="P:photosynthesis"/>
    <property type="evidence" value="ECO:0007669"/>
    <property type="project" value="UniProtKB-KW"/>
</dbReference>
<dbReference type="CDD" id="cd01614">
    <property type="entry name" value="EutN_CcmL"/>
    <property type="match status" value="1"/>
</dbReference>
<dbReference type="Gene3D" id="2.40.50.220">
    <property type="entry name" value="EutN/Ccml"/>
    <property type="match status" value="1"/>
</dbReference>
<dbReference type="InterPro" id="IPR014077">
    <property type="entry name" value="CsoS4B"/>
</dbReference>
<dbReference type="InterPro" id="IPR004992">
    <property type="entry name" value="EutN_CcmL"/>
</dbReference>
<dbReference type="InterPro" id="IPR036677">
    <property type="entry name" value="EutN_CcmL_sf"/>
</dbReference>
<dbReference type="NCBIfam" id="TIGR02704">
    <property type="entry name" value="carboxysome_B"/>
    <property type="match status" value="1"/>
</dbReference>
<dbReference type="PANTHER" id="PTHR36539:SF1">
    <property type="entry name" value="BACTERIAL MICROCOMPARTMENT SHELL VERTEX PROTEIN EUTN"/>
    <property type="match status" value="1"/>
</dbReference>
<dbReference type="PANTHER" id="PTHR36539">
    <property type="entry name" value="ETHANOLAMINE UTILIZATION PROTEIN EUTN"/>
    <property type="match status" value="1"/>
</dbReference>
<dbReference type="Pfam" id="PF03319">
    <property type="entry name" value="EutN_CcmL"/>
    <property type="match status" value="1"/>
</dbReference>
<dbReference type="SUPFAM" id="SSF159133">
    <property type="entry name" value="EutN/CcmL-like"/>
    <property type="match status" value="1"/>
</dbReference>
<dbReference type="PROSITE" id="PS51932">
    <property type="entry name" value="BMV"/>
    <property type="match status" value="1"/>
</dbReference>
<reference key="1">
    <citation type="journal article" date="2003" name="Nature">
        <title>Genome divergence in two Prochlorococcus ecotypes reflects oceanic niche differentiation.</title>
        <authorList>
            <person name="Rocap G."/>
            <person name="Larimer F.W."/>
            <person name="Lamerdin J.E."/>
            <person name="Malfatti S."/>
            <person name="Chain P."/>
            <person name="Ahlgren N.A."/>
            <person name="Arellano A."/>
            <person name="Coleman M."/>
            <person name="Hauser L."/>
            <person name="Hess W.R."/>
            <person name="Johnson Z.I."/>
            <person name="Land M.L."/>
            <person name="Lindell D."/>
            <person name="Post A.F."/>
            <person name="Regala W."/>
            <person name="Shah M."/>
            <person name="Shaw S.L."/>
            <person name="Steglich C."/>
            <person name="Sullivan M.B."/>
            <person name="Ting C.S."/>
            <person name="Tolonen A."/>
            <person name="Webb E.A."/>
            <person name="Zinser E.R."/>
            <person name="Chisholm S.W."/>
        </authorList>
    </citation>
    <scope>NUCLEOTIDE SEQUENCE [LARGE SCALE GENOMIC DNA]</scope>
    <source>
        <strain>CCMP1986 / NIES-2087 / MED4</strain>
    </source>
</reference>
<reference key="2">
    <citation type="journal article" date="2012" name="J. Bacteriol.">
        <title>Isolation and characterization of the Prochlorococcus carboxysome reveal the presence of the novel shell protein CsoS1D.</title>
        <authorList>
            <person name="Roberts E.W."/>
            <person name="Cai F."/>
            <person name="Kerfeld C.A."/>
            <person name="Cannon G.C."/>
            <person name="Heinhorst S."/>
        </authorList>
    </citation>
    <scope>DISCUSSION OF SEQUENCE</scope>
    <scope>FUNCTION</scope>
    <scope>PROTEIN ABUNDANCE</scope>
    <scope>SUBCELLULAR LOCATION</scope>
    <source>
        <strain>CCMP1986 / NIES-2087 / MED4</strain>
    </source>
</reference>
<feature type="chain" id="PRO_0000452084" description="Carboxysome shell vertex protein CsoS4B">
    <location>
        <begin position="1"/>
        <end position="73"/>
    </location>
</feature>
<feature type="domain" description="BMV" evidence="2">
    <location>
        <begin position="1"/>
        <end position="68"/>
    </location>
</feature>
<organism>
    <name type="scientific">Prochlorococcus marinus subsp. pastoris (strain CCMP1986 / NIES-2087 / MED4)</name>
    <dbReference type="NCBI Taxonomy" id="59919"/>
    <lineage>
        <taxon>Bacteria</taxon>
        <taxon>Bacillati</taxon>
        <taxon>Cyanobacteriota</taxon>
        <taxon>Cyanophyceae</taxon>
        <taxon>Synechococcales</taxon>
        <taxon>Prochlorococcaceae</taxon>
        <taxon>Prochlorococcus</taxon>
    </lineage>
</organism>
<comment type="function">
    <text evidence="1 6">Probably forms vertices in the carboxysome, a polyhedral inclusion where RuBisCO (ribulose bisphosphate carboxylase, cbbL-cbbS) is sequestered. Has been modeled to induce curvature upon insertion into an otherwise flat hexagonal layer of major carboxysome subunits (By similarity). Has not been identified in purified carboxysomes; it is expected to be present in very low amounts (Probable).</text>
</comment>
<comment type="subunit">
    <text evidence="1">Homopentamer.</text>
</comment>
<comment type="subcellular location">
    <subcellularLocation>
        <location evidence="6">Carboxysome</location>
    </subcellularLocation>
    <text evidence="1 3">Probably forms vertices in the polyhedral carboxysome (By similarity). This bacterium makes alpha-type carboxysomes (PubMed:22155772).</text>
</comment>
<comment type="domain">
    <text evidence="1">The tight homopentamer forms a pore with an opening of about 3.5 Angstroms in diameter which is positively charged.</text>
</comment>
<comment type="similarity">
    <text evidence="5">Belongs to the CcmL/EutN family. CsoS4 subfamily.</text>
</comment>